<dbReference type="EMBL" id="BX936398">
    <property type="protein sequence ID" value="CAH19699.1"/>
    <property type="molecule type" value="Genomic_DNA"/>
</dbReference>
<dbReference type="RefSeq" id="WP_002210173.1">
    <property type="nucleotide sequence ID" value="NZ_CP009712.1"/>
</dbReference>
<dbReference type="SMR" id="Q66F81"/>
<dbReference type="GeneID" id="57975197"/>
<dbReference type="KEGG" id="ypo:BZ17_2106"/>
<dbReference type="KEGG" id="yps:YPTB0459"/>
<dbReference type="PATRIC" id="fig|273123.14.peg.2232"/>
<dbReference type="UniPathway" id="UPA00068"/>
<dbReference type="Proteomes" id="UP000001011">
    <property type="component" value="Chromosome"/>
</dbReference>
<dbReference type="GO" id="GO:0005737">
    <property type="term" value="C:cytoplasm"/>
    <property type="evidence" value="ECO:0007669"/>
    <property type="project" value="UniProtKB-SubCell"/>
</dbReference>
<dbReference type="GO" id="GO:0034618">
    <property type="term" value="F:arginine binding"/>
    <property type="evidence" value="ECO:0007669"/>
    <property type="project" value="InterPro"/>
</dbReference>
<dbReference type="GO" id="GO:0003677">
    <property type="term" value="F:DNA binding"/>
    <property type="evidence" value="ECO:0007669"/>
    <property type="project" value="UniProtKB-KW"/>
</dbReference>
<dbReference type="GO" id="GO:0003700">
    <property type="term" value="F:DNA-binding transcription factor activity"/>
    <property type="evidence" value="ECO:0007669"/>
    <property type="project" value="UniProtKB-UniRule"/>
</dbReference>
<dbReference type="GO" id="GO:0006526">
    <property type="term" value="P:L-arginine biosynthetic process"/>
    <property type="evidence" value="ECO:0007669"/>
    <property type="project" value="UniProtKB-UniPathway"/>
</dbReference>
<dbReference type="GO" id="GO:0051259">
    <property type="term" value="P:protein complex oligomerization"/>
    <property type="evidence" value="ECO:0007669"/>
    <property type="project" value="InterPro"/>
</dbReference>
<dbReference type="GO" id="GO:1900079">
    <property type="term" value="P:regulation of arginine biosynthetic process"/>
    <property type="evidence" value="ECO:0007669"/>
    <property type="project" value="UniProtKB-UniRule"/>
</dbReference>
<dbReference type="FunFam" id="1.10.10.10:FF:000074">
    <property type="entry name" value="Arginine repressor"/>
    <property type="match status" value="1"/>
</dbReference>
<dbReference type="FunFam" id="3.30.1360.40:FF:000004">
    <property type="entry name" value="Arginine repressor"/>
    <property type="match status" value="1"/>
</dbReference>
<dbReference type="Gene3D" id="3.30.1360.40">
    <property type="match status" value="1"/>
</dbReference>
<dbReference type="Gene3D" id="1.10.10.10">
    <property type="entry name" value="Winged helix-like DNA-binding domain superfamily/Winged helix DNA-binding domain"/>
    <property type="match status" value="1"/>
</dbReference>
<dbReference type="HAMAP" id="MF_00173">
    <property type="entry name" value="Arg_repressor"/>
    <property type="match status" value="1"/>
</dbReference>
<dbReference type="InterPro" id="IPR001669">
    <property type="entry name" value="Arg_repress"/>
</dbReference>
<dbReference type="InterPro" id="IPR020899">
    <property type="entry name" value="Arg_repress_C"/>
</dbReference>
<dbReference type="InterPro" id="IPR036251">
    <property type="entry name" value="Arg_repress_C_sf"/>
</dbReference>
<dbReference type="InterPro" id="IPR020900">
    <property type="entry name" value="Arg_repress_DNA-bd"/>
</dbReference>
<dbReference type="InterPro" id="IPR036388">
    <property type="entry name" value="WH-like_DNA-bd_sf"/>
</dbReference>
<dbReference type="InterPro" id="IPR036390">
    <property type="entry name" value="WH_DNA-bd_sf"/>
</dbReference>
<dbReference type="NCBIfam" id="TIGR01529">
    <property type="entry name" value="argR_whole"/>
    <property type="match status" value="1"/>
</dbReference>
<dbReference type="NCBIfam" id="NF003457">
    <property type="entry name" value="PRK05066.1"/>
    <property type="match status" value="1"/>
</dbReference>
<dbReference type="PANTHER" id="PTHR34471">
    <property type="entry name" value="ARGININE REPRESSOR"/>
    <property type="match status" value="1"/>
</dbReference>
<dbReference type="PANTHER" id="PTHR34471:SF1">
    <property type="entry name" value="ARGININE REPRESSOR"/>
    <property type="match status" value="1"/>
</dbReference>
<dbReference type="Pfam" id="PF01316">
    <property type="entry name" value="Arg_repressor"/>
    <property type="match status" value="1"/>
</dbReference>
<dbReference type="Pfam" id="PF02863">
    <property type="entry name" value="Arg_repressor_C"/>
    <property type="match status" value="1"/>
</dbReference>
<dbReference type="PRINTS" id="PR01467">
    <property type="entry name" value="ARGREPRESSOR"/>
</dbReference>
<dbReference type="SUPFAM" id="SSF55252">
    <property type="entry name" value="C-terminal domain of arginine repressor"/>
    <property type="match status" value="1"/>
</dbReference>
<dbReference type="SUPFAM" id="SSF46785">
    <property type="entry name" value="Winged helix' DNA-binding domain"/>
    <property type="match status" value="1"/>
</dbReference>
<accession>Q66F81</accession>
<sequence>MRNPAKQEDLIKAFKALLKEEKFSSQGEIVLALQEEGFENINQSKVSRMLTKFGAVRTRNAKMEMVYCLPAELGVPTTSSPLKNLVLDVDYNDSVVVINTSPGAAQLIARLLDSLGKAEGILGSIAGDDTIFTTPARGFTVKQLHEAILRLFEQEL</sequence>
<proteinExistence type="inferred from homology"/>
<name>ARGR_YERPS</name>
<organism>
    <name type="scientific">Yersinia pseudotuberculosis serotype I (strain IP32953)</name>
    <dbReference type="NCBI Taxonomy" id="273123"/>
    <lineage>
        <taxon>Bacteria</taxon>
        <taxon>Pseudomonadati</taxon>
        <taxon>Pseudomonadota</taxon>
        <taxon>Gammaproteobacteria</taxon>
        <taxon>Enterobacterales</taxon>
        <taxon>Yersiniaceae</taxon>
        <taxon>Yersinia</taxon>
    </lineage>
</organism>
<gene>
    <name evidence="1" type="primary">argR</name>
    <name type="ordered locus">YPTB0459</name>
</gene>
<feature type="chain" id="PRO_0000205144" description="Arginine repressor">
    <location>
        <begin position="1"/>
        <end position="156"/>
    </location>
</feature>
<comment type="function">
    <text evidence="1">Regulates arginine biosynthesis genes.</text>
</comment>
<comment type="pathway">
    <text>Amino-acid biosynthesis; L-arginine biosynthesis [regulation].</text>
</comment>
<comment type="subcellular location">
    <subcellularLocation>
        <location evidence="1">Cytoplasm</location>
    </subcellularLocation>
</comment>
<comment type="similarity">
    <text evidence="1">Belongs to the ArgR family.</text>
</comment>
<reference key="1">
    <citation type="journal article" date="2004" name="Proc. Natl. Acad. Sci. U.S.A.">
        <title>Insights into the evolution of Yersinia pestis through whole-genome comparison with Yersinia pseudotuberculosis.</title>
        <authorList>
            <person name="Chain P.S.G."/>
            <person name="Carniel E."/>
            <person name="Larimer F.W."/>
            <person name="Lamerdin J."/>
            <person name="Stoutland P.O."/>
            <person name="Regala W.M."/>
            <person name="Georgescu A.M."/>
            <person name="Vergez L.M."/>
            <person name="Land M.L."/>
            <person name="Motin V.L."/>
            <person name="Brubaker R.R."/>
            <person name="Fowler J."/>
            <person name="Hinnebusch J."/>
            <person name="Marceau M."/>
            <person name="Medigue C."/>
            <person name="Simonet M."/>
            <person name="Chenal-Francisque V."/>
            <person name="Souza B."/>
            <person name="Dacheux D."/>
            <person name="Elliott J.M."/>
            <person name="Derbise A."/>
            <person name="Hauser L.J."/>
            <person name="Garcia E."/>
        </authorList>
    </citation>
    <scope>NUCLEOTIDE SEQUENCE [LARGE SCALE GENOMIC DNA]</scope>
    <source>
        <strain>IP32953</strain>
    </source>
</reference>
<keyword id="KW-0028">Amino-acid biosynthesis</keyword>
<keyword id="KW-0055">Arginine biosynthesis</keyword>
<keyword id="KW-0963">Cytoplasm</keyword>
<keyword id="KW-0238">DNA-binding</keyword>
<keyword id="KW-0678">Repressor</keyword>
<keyword id="KW-0804">Transcription</keyword>
<keyword id="KW-0805">Transcription regulation</keyword>
<protein>
    <recommendedName>
        <fullName evidence="1">Arginine repressor</fullName>
    </recommendedName>
</protein>
<evidence type="ECO:0000255" key="1">
    <source>
        <dbReference type="HAMAP-Rule" id="MF_00173"/>
    </source>
</evidence>